<sequence>MKGLLQRVKGARVEVAGEVVGSVDQGLLVLVAVEPDDTPASADKLLHKLLNYRVFSDAEGKMNLSLADVGGGLLLVSQFTLAADTKSGLRPSFSTAAPPALGEKLFDYLLSRAKQMHGTVASGRFGADMQVHLVNDGPVTFLLQT</sequence>
<name>DTD_PSEPF</name>
<accession>Q3KJE0</accession>
<evidence type="ECO:0000255" key="1">
    <source>
        <dbReference type="HAMAP-Rule" id="MF_00518"/>
    </source>
</evidence>
<dbReference type="EC" id="3.1.1.96" evidence="1"/>
<dbReference type="EMBL" id="CP000094">
    <property type="protein sequence ID" value="ABA72116.1"/>
    <property type="molecule type" value="Genomic_DNA"/>
</dbReference>
<dbReference type="RefSeq" id="WP_011332054.1">
    <property type="nucleotide sequence ID" value="NC_007492.2"/>
</dbReference>
<dbReference type="SMR" id="Q3KJE0"/>
<dbReference type="KEGG" id="pfo:Pfl01_0372"/>
<dbReference type="eggNOG" id="COG1490">
    <property type="taxonomic scope" value="Bacteria"/>
</dbReference>
<dbReference type="HOGENOM" id="CLU_076901_1_1_6"/>
<dbReference type="Proteomes" id="UP000002704">
    <property type="component" value="Chromosome"/>
</dbReference>
<dbReference type="GO" id="GO:0005737">
    <property type="term" value="C:cytoplasm"/>
    <property type="evidence" value="ECO:0007669"/>
    <property type="project" value="UniProtKB-SubCell"/>
</dbReference>
<dbReference type="GO" id="GO:0051500">
    <property type="term" value="F:D-tyrosyl-tRNA(Tyr) deacylase activity"/>
    <property type="evidence" value="ECO:0007669"/>
    <property type="project" value="TreeGrafter"/>
</dbReference>
<dbReference type="GO" id="GO:0106026">
    <property type="term" value="F:Gly-tRNA(Ala) deacylase activity"/>
    <property type="evidence" value="ECO:0007669"/>
    <property type="project" value="UniProtKB-UniRule"/>
</dbReference>
<dbReference type="GO" id="GO:0043908">
    <property type="term" value="F:Ser(Gly)-tRNA(Ala) hydrolase activity"/>
    <property type="evidence" value="ECO:0007669"/>
    <property type="project" value="UniProtKB-UniRule"/>
</dbReference>
<dbReference type="GO" id="GO:0000049">
    <property type="term" value="F:tRNA binding"/>
    <property type="evidence" value="ECO:0007669"/>
    <property type="project" value="UniProtKB-UniRule"/>
</dbReference>
<dbReference type="GO" id="GO:0019478">
    <property type="term" value="P:D-amino acid catabolic process"/>
    <property type="evidence" value="ECO:0007669"/>
    <property type="project" value="UniProtKB-UniRule"/>
</dbReference>
<dbReference type="CDD" id="cd00563">
    <property type="entry name" value="Dtyr_deacylase"/>
    <property type="match status" value="1"/>
</dbReference>
<dbReference type="FunFam" id="3.50.80.10:FF:000001">
    <property type="entry name" value="D-aminoacyl-tRNA deacylase"/>
    <property type="match status" value="1"/>
</dbReference>
<dbReference type="Gene3D" id="3.50.80.10">
    <property type="entry name" value="D-tyrosyl-tRNA(Tyr) deacylase"/>
    <property type="match status" value="1"/>
</dbReference>
<dbReference type="HAMAP" id="MF_00518">
    <property type="entry name" value="Deacylase_Dtd"/>
    <property type="match status" value="1"/>
</dbReference>
<dbReference type="InterPro" id="IPR003732">
    <property type="entry name" value="Daa-tRNA_deacyls_DTD"/>
</dbReference>
<dbReference type="InterPro" id="IPR023509">
    <property type="entry name" value="DTD-like_sf"/>
</dbReference>
<dbReference type="NCBIfam" id="TIGR00256">
    <property type="entry name" value="D-aminoacyl-tRNA deacylase"/>
    <property type="match status" value="1"/>
</dbReference>
<dbReference type="PANTHER" id="PTHR10472:SF5">
    <property type="entry name" value="D-AMINOACYL-TRNA DEACYLASE 1"/>
    <property type="match status" value="1"/>
</dbReference>
<dbReference type="PANTHER" id="PTHR10472">
    <property type="entry name" value="D-TYROSYL-TRNA TYR DEACYLASE"/>
    <property type="match status" value="1"/>
</dbReference>
<dbReference type="Pfam" id="PF02580">
    <property type="entry name" value="Tyr_Deacylase"/>
    <property type="match status" value="1"/>
</dbReference>
<dbReference type="SUPFAM" id="SSF69500">
    <property type="entry name" value="DTD-like"/>
    <property type="match status" value="1"/>
</dbReference>
<organism>
    <name type="scientific">Pseudomonas fluorescens (strain Pf0-1)</name>
    <dbReference type="NCBI Taxonomy" id="205922"/>
    <lineage>
        <taxon>Bacteria</taxon>
        <taxon>Pseudomonadati</taxon>
        <taxon>Pseudomonadota</taxon>
        <taxon>Gammaproteobacteria</taxon>
        <taxon>Pseudomonadales</taxon>
        <taxon>Pseudomonadaceae</taxon>
        <taxon>Pseudomonas</taxon>
    </lineage>
</organism>
<protein>
    <recommendedName>
        <fullName evidence="1">D-aminoacyl-tRNA deacylase</fullName>
        <shortName evidence="1">DTD</shortName>
        <ecNumber evidence="1">3.1.1.96</ecNumber>
    </recommendedName>
    <alternativeName>
        <fullName evidence="1">Gly-tRNA(Ala) deacylase</fullName>
    </alternativeName>
</protein>
<feature type="chain" id="PRO_0000259298" description="D-aminoacyl-tRNA deacylase">
    <location>
        <begin position="1"/>
        <end position="145"/>
    </location>
</feature>
<feature type="short sequence motif" description="Gly-cisPro motif, important for rejection of L-amino acids" evidence="1">
    <location>
        <begin position="137"/>
        <end position="138"/>
    </location>
</feature>
<gene>
    <name evidence="1" type="primary">dtd</name>
    <name type="ordered locus">Pfl01_0372</name>
</gene>
<reference key="1">
    <citation type="journal article" date="2009" name="Genome Biol.">
        <title>Genomic and genetic analyses of diversity and plant interactions of Pseudomonas fluorescens.</title>
        <authorList>
            <person name="Silby M.W."/>
            <person name="Cerdeno-Tarraga A.M."/>
            <person name="Vernikos G.S."/>
            <person name="Giddens S.R."/>
            <person name="Jackson R.W."/>
            <person name="Preston G.M."/>
            <person name="Zhang X.-X."/>
            <person name="Moon C.D."/>
            <person name="Gehrig S.M."/>
            <person name="Godfrey S.A.C."/>
            <person name="Knight C.G."/>
            <person name="Malone J.G."/>
            <person name="Robinson Z."/>
            <person name="Spiers A.J."/>
            <person name="Harris S."/>
            <person name="Challis G.L."/>
            <person name="Yaxley A.M."/>
            <person name="Harris D."/>
            <person name="Seeger K."/>
            <person name="Murphy L."/>
            <person name="Rutter S."/>
            <person name="Squares R."/>
            <person name="Quail M.A."/>
            <person name="Saunders E."/>
            <person name="Mavromatis K."/>
            <person name="Brettin T.S."/>
            <person name="Bentley S.D."/>
            <person name="Hothersall J."/>
            <person name="Stephens E."/>
            <person name="Thomas C.M."/>
            <person name="Parkhill J."/>
            <person name="Levy S.B."/>
            <person name="Rainey P.B."/>
            <person name="Thomson N.R."/>
        </authorList>
    </citation>
    <scope>NUCLEOTIDE SEQUENCE [LARGE SCALE GENOMIC DNA]</scope>
    <source>
        <strain>Pf0-1</strain>
    </source>
</reference>
<keyword id="KW-0963">Cytoplasm</keyword>
<keyword id="KW-0378">Hydrolase</keyword>
<keyword id="KW-0694">RNA-binding</keyword>
<keyword id="KW-0820">tRNA-binding</keyword>
<comment type="function">
    <text evidence="1">An aminoacyl-tRNA editing enzyme that deacylates mischarged D-aminoacyl-tRNAs. Also deacylates mischarged glycyl-tRNA(Ala), protecting cells against glycine mischarging by AlaRS. Acts via tRNA-based rather than protein-based catalysis; rejects L-amino acids rather than detecting D-amino acids in the active site. By recycling D-aminoacyl-tRNA to D-amino acids and free tRNA molecules, this enzyme counteracts the toxicity associated with the formation of D-aminoacyl-tRNA entities in vivo and helps enforce protein L-homochirality.</text>
</comment>
<comment type="catalytic activity">
    <reaction evidence="1">
        <text>glycyl-tRNA(Ala) + H2O = tRNA(Ala) + glycine + H(+)</text>
        <dbReference type="Rhea" id="RHEA:53744"/>
        <dbReference type="Rhea" id="RHEA-COMP:9657"/>
        <dbReference type="Rhea" id="RHEA-COMP:13640"/>
        <dbReference type="ChEBI" id="CHEBI:15377"/>
        <dbReference type="ChEBI" id="CHEBI:15378"/>
        <dbReference type="ChEBI" id="CHEBI:57305"/>
        <dbReference type="ChEBI" id="CHEBI:78442"/>
        <dbReference type="ChEBI" id="CHEBI:78522"/>
        <dbReference type="EC" id="3.1.1.96"/>
    </reaction>
</comment>
<comment type="catalytic activity">
    <reaction evidence="1">
        <text>a D-aminoacyl-tRNA + H2O = a tRNA + a D-alpha-amino acid + H(+)</text>
        <dbReference type="Rhea" id="RHEA:13953"/>
        <dbReference type="Rhea" id="RHEA-COMP:10123"/>
        <dbReference type="Rhea" id="RHEA-COMP:10124"/>
        <dbReference type="ChEBI" id="CHEBI:15377"/>
        <dbReference type="ChEBI" id="CHEBI:15378"/>
        <dbReference type="ChEBI" id="CHEBI:59871"/>
        <dbReference type="ChEBI" id="CHEBI:78442"/>
        <dbReference type="ChEBI" id="CHEBI:79333"/>
        <dbReference type="EC" id="3.1.1.96"/>
    </reaction>
</comment>
<comment type="subunit">
    <text evidence="1">Homodimer.</text>
</comment>
<comment type="subcellular location">
    <subcellularLocation>
        <location evidence="1">Cytoplasm</location>
    </subcellularLocation>
</comment>
<comment type="domain">
    <text evidence="1">A Gly-cisPro motif from one monomer fits into the active site of the other monomer to allow specific chiral rejection of L-amino acids.</text>
</comment>
<comment type="similarity">
    <text evidence="1">Belongs to the DTD family.</text>
</comment>
<proteinExistence type="inferred from homology"/>